<proteinExistence type="inferred from homology"/>
<sequence length="780" mass="87396">MRINILRVEYHSKTAHSILLQLDLFKKVKVICHMSQSIKFRVTEARQRDVGKKVARISETSMRKLNVEAGDYIEIIGQDGNSALAQVMPAYDISDDEIRIDGYIRKSIKVGIGDDVTVRKTNVSPASKVVLAPTQPIRFDNSFVEYVKDTLMDKPLAKGETLPIPIYTGTLELTVVNTQPSNYVYVTGSTNIEIREEPVKESSLAYPKVSWEDIGDLEEAKQKIREIVEWPMRHPELFQRLGIDPPKGILLYGPPGTGKTLLARALANEIGAYFITVNGPEIMSKFYGESEQRIREIFKEAEENAPSIIFIDEIDAIAPKREDVTGEVEKRVVAQLLTLMDGIKGRGRVIVIGATNRPDAIDPALRRPGRFDREIEIRPPDTKGRKDILQVHTRNMPITDDVDLDKLAEMTYGYTGADLAALAKEAAIYALRRFVDEKKLNLDQPTIPAEIIKELKVSMNDFLNALKSIQPSLLREVYVEVPKVNWNDIGGLDNVKQQLREAVEWPLRFPELFTKSGVTPPKGILLFGPPGTGKTMLAKAVATESGANFIAVRGPEILSKWVGESEKAIREIFRKARQAAPTVIFFDEIDSIAPIRGLSTDSGVTERIVNQLLAEMDGIVPLNKVVIIAATNRPDILDPALLRPGRFDRLIYVPPPDKTARFEILKVHTKNVPLAEDVSLEDIAEKAEGYTGADLEALVREATINAMRSIYSMCDKQSRDECKGNMECYQKHIKECMNKTSFKVSKEDFEKALNVVKASLTQADIQRYERFSKELKRAIA</sequence>
<keyword id="KW-0067">ATP-binding</keyword>
<keyword id="KW-0547">Nucleotide-binding</keyword>
<keyword id="KW-1185">Reference proteome</keyword>
<keyword id="KW-0677">Repeat</keyword>
<dbReference type="EMBL" id="L17042">
    <property type="protein sequence ID" value="AAA72002.1"/>
    <property type="molecule type" value="Unassigned_DNA"/>
</dbReference>
<dbReference type="EMBL" id="CP000077">
    <property type="protein sequence ID" value="AAY80205.1"/>
    <property type="status" value="ALT_INIT"/>
    <property type="molecule type" value="Genomic_DNA"/>
</dbReference>
<dbReference type="PIR" id="S43859">
    <property type="entry name" value="S43859"/>
</dbReference>
<dbReference type="RefSeq" id="WP_011277707.1">
    <property type="nucleotide sequence ID" value="NZ_CP046615.1"/>
</dbReference>
<dbReference type="SMR" id="Q07590"/>
<dbReference type="STRING" id="330779.Saci_0838"/>
<dbReference type="KEGG" id="sai:Saci_0838"/>
<dbReference type="PATRIC" id="fig|330779.12.peg.802"/>
<dbReference type="eggNOG" id="arCOG01308">
    <property type="taxonomic scope" value="Archaea"/>
</dbReference>
<dbReference type="HOGENOM" id="CLU_000688_12_2_2"/>
<dbReference type="Proteomes" id="UP000001018">
    <property type="component" value="Chromosome"/>
</dbReference>
<dbReference type="GO" id="GO:0005524">
    <property type="term" value="F:ATP binding"/>
    <property type="evidence" value="ECO:0007669"/>
    <property type="project" value="UniProtKB-KW"/>
</dbReference>
<dbReference type="GO" id="GO:0016887">
    <property type="term" value="F:ATP hydrolysis activity"/>
    <property type="evidence" value="ECO:0007669"/>
    <property type="project" value="InterPro"/>
</dbReference>
<dbReference type="CDD" id="cd19519">
    <property type="entry name" value="RecA-like_CDC48_r1-like"/>
    <property type="match status" value="1"/>
</dbReference>
<dbReference type="CDD" id="cd19529">
    <property type="entry name" value="RecA-like_VCP_r2"/>
    <property type="match status" value="1"/>
</dbReference>
<dbReference type="FunFam" id="2.40.40.20:FF:000007">
    <property type="entry name" value="AAA family ATPase"/>
    <property type="match status" value="1"/>
</dbReference>
<dbReference type="FunFam" id="1.10.8.60:FF:000057">
    <property type="entry name" value="AAA family ATPase, CDC48 subfamily"/>
    <property type="match status" value="1"/>
</dbReference>
<dbReference type="FunFam" id="3.10.330.10:FF:000008">
    <property type="entry name" value="AAA family ATPase, CDC48 subfamily"/>
    <property type="match status" value="1"/>
</dbReference>
<dbReference type="FunFam" id="3.40.50.300:FF:000018">
    <property type="entry name" value="Cell division control 48"/>
    <property type="match status" value="1"/>
</dbReference>
<dbReference type="FunFam" id="1.10.8.60:FF:000105">
    <property type="entry name" value="PeRoXisome assembly factor"/>
    <property type="match status" value="1"/>
</dbReference>
<dbReference type="FunFam" id="3.40.50.300:FF:000012">
    <property type="entry name" value="Transitional endoplasmic reticulum ATPase"/>
    <property type="match status" value="1"/>
</dbReference>
<dbReference type="Gene3D" id="1.10.8.60">
    <property type="match status" value="2"/>
</dbReference>
<dbReference type="Gene3D" id="2.40.40.20">
    <property type="match status" value="1"/>
</dbReference>
<dbReference type="Gene3D" id="3.10.330.10">
    <property type="match status" value="1"/>
</dbReference>
<dbReference type="Gene3D" id="3.40.50.300">
    <property type="entry name" value="P-loop containing nucleotide triphosphate hydrolases"/>
    <property type="match status" value="2"/>
</dbReference>
<dbReference type="InterPro" id="IPR003593">
    <property type="entry name" value="AAA+_ATPase"/>
</dbReference>
<dbReference type="InterPro" id="IPR005938">
    <property type="entry name" value="AAA_ATPase_CDC48"/>
</dbReference>
<dbReference type="InterPro" id="IPR050168">
    <property type="entry name" value="AAA_ATPase_domain"/>
</dbReference>
<dbReference type="InterPro" id="IPR041569">
    <property type="entry name" value="AAA_lid_3"/>
</dbReference>
<dbReference type="InterPro" id="IPR009010">
    <property type="entry name" value="Asp_de-COase-like_dom_sf"/>
</dbReference>
<dbReference type="InterPro" id="IPR003959">
    <property type="entry name" value="ATPase_AAA_core"/>
</dbReference>
<dbReference type="InterPro" id="IPR003960">
    <property type="entry name" value="ATPase_AAA_CS"/>
</dbReference>
<dbReference type="InterPro" id="IPR004201">
    <property type="entry name" value="Cdc48_dom2"/>
</dbReference>
<dbReference type="InterPro" id="IPR029067">
    <property type="entry name" value="CDC48_domain_2-like_sf"/>
</dbReference>
<dbReference type="InterPro" id="IPR003338">
    <property type="entry name" value="CDC4_N-term_subdom"/>
</dbReference>
<dbReference type="InterPro" id="IPR027417">
    <property type="entry name" value="P-loop_NTPase"/>
</dbReference>
<dbReference type="InterPro" id="IPR015415">
    <property type="entry name" value="Spast_Vps4_C"/>
</dbReference>
<dbReference type="NCBIfam" id="TIGR01243">
    <property type="entry name" value="CDC48"/>
    <property type="match status" value="1"/>
</dbReference>
<dbReference type="PANTHER" id="PTHR23077:SF199">
    <property type="entry name" value="AAA FAMILY ATPASE"/>
    <property type="match status" value="1"/>
</dbReference>
<dbReference type="PANTHER" id="PTHR23077">
    <property type="entry name" value="AAA-FAMILY ATPASE"/>
    <property type="match status" value="1"/>
</dbReference>
<dbReference type="Pfam" id="PF00004">
    <property type="entry name" value="AAA"/>
    <property type="match status" value="2"/>
</dbReference>
<dbReference type="Pfam" id="PF17862">
    <property type="entry name" value="AAA_lid_3"/>
    <property type="match status" value="2"/>
</dbReference>
<dbReference type="Pfam" id="PF02933">
    <property type="entry name" value="CDC48_2"/>
    <property type="match status" value="1"/>
</dbReference>
<dbReference type="Pfam" id="PF02359">
    <property type="entry name" value="CDC48_N"/>
    <property type="match status" value="1"/>
</dbReference>
<dbReference type="Pfam" id="PF09336">
    <property type="entry name" value="Vps4_C"/>
    <property type="match status" value="1"/>
</dbReference>
<dbReference type="SMART" id="SM00382">
    <property type="entry name" value="AAA"/>
    <property type="match status" value="2"/>
</dbReference>
<dbReference type="SMART" id="SM01072">
    <property type="entry name" value="CDC48_2"/>
    <property type="match status" value="1"/>
</dbReference>
<dbReference type="SMART" id="SM01073">
    <property type="entry name" value="CDC48_N"/>
    <property type="match status" value="1"/>
</dbReference>
<dbReference type="SUPFAM" id="SSF50692">
    <property type="entry name" value="ADC-like"/>
    <property type="match status" value="1"/>
</dbReference>
<dbReference type="SUPFAM" id="SSF54585">
    <property type="entry name" value="Cdc48 domain 2-like"/>
    <property type="match status" value="1"/>
</dbReference>
<dbReference type="SUPFAM" id="SSF52540">
    <property type="entry name" value="P-loop containing nucleoside triphosphate hydrolases"/>
    <property type="match status" value="2"/>
</dbReference>
<dbReference type="PROSITE" id="PS00674">
    <property type="entry name" value="AAA"/>
    <property type="match status" value="2"/>
</dbReference>
<gene>
    <name type="primary">sav</name>
    <name type="ordered locus">Saci_0838</name>
</gene>
<reference key="1">
    <citation type="journal article" date="1994" name="J. Mol. Biol.">
        <title>SAV, an archaebacterial gene with extensive homology to a family of highly conserved eukaryotic ATPases.</title>
        <authorList>
            <person name="Confalonieri F."/>
            <person name="Marsault J."/>
            <person name="Duguet M."/>
        </authorList>
    </citation>
    <scope>NUCLEOTIDE SEQUENCE [GENOMIC DNA]</scope>
    <source>
        <strain>ATCC 33909 / DSM 639 / JCM 8929 / NBRC 15157 / NCIMB 11770</strain>
    </source>
</reference>
<reference key="2">
    <citation type="journal article" date="2005" name="J. Bacteriol.">
        <title>The genome of Sulfolobus acidocaldarius, a model organism of the Crenarchaeota.</title>
        <authorList>
            <person name="Chen L."/>
            <person name="Bruegger K."/>
            <person name="Skovgaard M."/>
            <person name="Redder P."/>
            <person name="She Q."/>
            <person name="Torarinsson E."/>
            <person name="Greve B."/>
            <person name="Awayez M."/>
            <person name="Zibat A."/>
            <person name="Klenk H.-P."/>
            <person name="Garrett R.A."/>
        </authorList>
    </citation>
    <scope>NUCLEOTIDE SEQUENCE [LARGE SCALE GENOMIC DNA]</scope>
    <source>
        <strain>ATCC 33909 / DSM 639 / JCM 8929 / NBRC 15157 / NCIMB 11770</strain>
    </source>
</reference>
<comment type="function">
    <text>Not yet known, shows ATPase activity.</text>
</comment>
<comment type="similarity">
    <text evidence="2">Belongs to the AAA ATPase family. CDC48 subfamily.</text>
</comment>
<comment type="sequence caution" evidence="2">
    <conflict type="erroneous initiation">
        <sequence resource="EMBL-CDS" id="AAY80205"/>
    </conflict>
</comment>
<protein>
    <recommendedName>
        <fullName>Protein SAV</fullName>
    </recommendedName>
</protein>
<evidence type="ECO:0000255" key="1"/>
<evidence type="ECO:0000305" key="2"/>
<name>SAV_SULAC</name>
<accession>Q07590</accession>
<accession>Q4JAH4</accession>
<organism>
    <name type="scientific">Sulfolobus acidocaldarius (strain ATCC 33909 / DSM 639 / JCM 8929 / NBRC 15157 / NCIMB 11770)</name>
    <dbReference type="NCBI Taxonomy" id="330779"/>
    <lineage>
        <taxon>Archaea</taxon>
        <taxon>Thermoproteota</taxon>
        <taxon>Thermoprotei</taxon>
        <taxon>Sulfolobales</taxon>
        <taxon>Sulfolobaceae</taxon>
        <taxon>Sulfolobus</taxon>
    </lineage>
</organism>
<feature type="chain" id="PRO_0000084623" description="Protein SAV">
    <location>
        <begin position="1"/>
        <end position="780"/>
    </location>
</feature>
<feature type="binding site" evidence="1">
    <location>
        <begin position="253"/>
        <end position="260"/>
    </location>
    <ligand>
        <name>ATP</name>
        <dbReference type="ChEBI" id="CHEBI:30616"/>
    </ligand>
</feature>
<feature type="binding site" evidence="1">
    <location>
        <begin position="528"/>
        <end position="535"/>
    </location>
    <ligand>
        <name>ATP</name>
        <dbReference type="ChEBI" id="CHEBI:30616"/>
    </ligand>
</feature>
<feature type="sequence conflict" description="In Ref. 1; AAA72002." evidence="2" ref="1">
    <original>A</original>
    <variation>R</variation>
    <location>
        <position position="267"/>
    </location>
</feature>